<accession>P61332</accession>
<dbReference type="EMBL" id="BX248358">
    <property type="protein sequence ID" value="CAE50034.1"/>
    <property type="molecule type" value="Genomic_DNA"/>
</dbReference>
<dbReference type="RefSeq" id="WP_010935114.1">
    <property type="nucleotide sequence ID" value="NC_002935.2"/>
</dbReference>
<dbReference type="SMR" id="P61332"/>
<dbReference type="STRING" id="257309.DIP1507"/>
<dbReference type="KEGG" id="cdi:DIP1507"/>
<dbReference type="HOGENOM" id="CLU_047155_0_0_11"/>
<dbReference type="Proteomes" id="UP000002198">
    <property type="component" value="Chromosome"/>
</dbReference>
<dbReference type="GO" id="GO:0005737">
    <property type="term" value="C:cytoplasm"/>
    <property type="evidence" value="ECO:0007669"/>
    <property type="project" value="UniProtKB-SubCell"/>
</dbReference>
<dbReference type="GO" id="GO:0003746">
    <property type="term" value="F:translation elongation factor activity"/>
    <property type="evidence" value="ECO:0007669"/>
    <property type="project" value="UniProtKB-UniRule"/>
</dbReference>
<dbReference type="CDD" id="cd14275">
    <property type="entry name" value="UBA_EF-Ts"/>
    <property type="match status" value="1"/>
</dbReference>
<dbReference type="FunFam" id="1.10.286.20:FF:000001">
    <property type="entry name" value="Elongation factor Ts"/>
    <property type="match status" value="1"/>
</dbReference>
<dbReference type="FunFam" id="1.10.8.10:FF:000001">
    <property type="entry name" value="Elongation factor Ts"/>
    <property type="match status" value="1"/>
</dbReference>
<dbReference type="Gene3D" id="1.10.286.20">
    <property type="match status" value="1"/>
</dbReference>
<dbReference type="Gene3D" id="1.10.8.10">
    <property type="entry name" value="DNA helicase RuvA subunit, C-terminal domain"/>
    <property type="match status" value="1"/>
</dbReference>
<dbReference type="Gene3D" id="3.30.479.20">
    <property type="entry name" value="Elongation factor Ts, dimerisation domain"/>
    <property type="match status" value="2"/>
</dbReference>
<dbReference type="HAMAP" id="MF_00050">
    <property type="entry name" value="EF_Ts"/>
    <property type="match status" value="1"/>
</dbReference>
<dbReference type="InterPro" id="IPR036402">
    <property type="entry name" value="EF-Ts_dimer_sf"/>
</dbReference>
<dbReference type="InterPro" id="IPR001816">
    <property type="entry name" value="Transl_elong_EFTs/EF1B"/>
</dbReference>
<dbReference type="InterPro" id="IPR014039">
    <property type="entry name" value="Transl_elong_EFTs/EF1B_dimer"/>
</dbReference>
<dbReference type="InterPro" id="IPR018101">
    <property type="entry name" value="Transl_elong_Ts_CS"/>
</dbReference>
<dbReference type="InterPro" id="IPR009060">
    <property type="entry name" value="UBA-like_sf"/>
</dbReference>
<dbReference type="NCBIfam" id="TIGR00116">
    <property type="entry name" value="tsf"/>
    <property type="match status" value="1"/>
</dbReference>
<dbReference type="PANTHER" id="PTHR11741">
    <property type="entry name" value="ELONGATION FACTOR TS"/>
    <property type="match status" value="1"/>
</dbReference>
<dbReference type="PANTHER" id="PTHR11741:SF0">
    <property type="entry name" value="ELONGATION FACTOR TS, MITOCHONDRIAL"/>
    <property type="match status" value="1"/>
</dbReference>
<dbReference type="Pfam" id="PF00889">
    <property type="entry name" value="EF_TS"/>
    <property type="match status" value="1"/>
</dbReference>
<dbReference type="SUPFAM" id="SSF54713">
    <property type="entry name" value="Elongation factor Ts (EF-Ts), dimerisation domain"/>
    <property type="match status" value="1"/>
</dbReference>
<dbReference type="SUPFAM" id="SSF46934">
    <property type="entry name" value="UBA-like"/>
    <property type="match status" value="1"/>
</dbReference>
<dbReference type="PROSITE" id="PS01126">
    <property type="entry name" value="EF_TS_1"/>
    <property type="match status" value="1"/>
</dbReference>
<dbReference type="PROSITE" id="PS01127">
    <property type="entry name" value="EF_TS_2"/>
    <property type="match status" value="1"/>
</dbReference>
<feature type="chain" id="PRO_0000161110" description="Elongation factor Ts">
    <location>
        <begin position="1"/>
        <end position="275"/>
    </location>
</feature>
<feature type="region of interest" description="Involved in Mg(2+) ion dislocation from EF-Tu" evidence="1">
    <location>
        <begin position="76"/>
        <end position="79"/>
    </location>
</feature>
<protein>
    <recommendedName>
        <fullName evidence="1">Elongation factor Ts</fullName>
        <shortName evidence="1">EF-Ts</shortName>
    </recommendedName>
</protein>
<proteinExistence type="inferred from homology"/>
<sequence>MANYTAADVKKLREITGSGMLDCKKALEETNGDFDKAVEVLRIKGAKDVGKRAERNATEGLIAVSGNTMVEINSETDFVAKNAEFKEFAQKVADAAAAVKANTPEELAAADLDGKTAADAIQELSAKIGEKLELRRAITLEGEKLSVYLHQRSADLPPAVGVLVAYTGEGEAAQAAAHAAAMQVAALKAQYLTREDVPAEVIEKERSIAEQITREEGKPEKAIPKIVEGRLNGFYKDVCLVEQASVADSKKTVKQVMDEAGVTLTGFARYEVGQH</sequence>
<reference key="1">
    <citation type="journal article" date="2003" name="Nucleic Acids Res.">
        <title>The complete genome sequence and analysis of Corynebacterium diphtheriae NCTC13129.</title>
        <authorList>
            <person name="Cerdeno-Tarraga A.-M."/>
            <person name="Efstratiou A."/>
            <person name="Dover L.G."/>
            <person name="Holden M.T.G."/>
            <person name="Pallen M.J."/>
            <person name="Bentley S.D."/>
            <person name="Besra G.S."/>
            <person name="Churcher C.M."/>
            <person name="James K.D."/>
            <person name="De Zoysa A."/>
            <person name="Chillingworth T."/>
            <person name="Cronin A."/>
            <person name="Dowd L."/>
            <person name="Feltwell T."/>
            <person name="Hamlin N."/>
            <person name="Holroyd S."/>
            <person name="Jagels K."/>
            <person name="Moule S."/>
            <person name="Quail M.A."/>
            <person name="Rabbinowitsch E."/>
            <person name="Rutherford K.M."/>
            <person name="Thomson N.R."/>
            <person name="Unwin L."/>
            <person name="Whitehead S."/>
            <person name="Barrell B.G."/>
            <person name="Parkhill J."/>
        </authorList>
    </citation>
    <scope>NUCLEOTIDE SEQUENCE [LARGE SCALE GENOMIC DNA]</scope>
    <source>
        <strain>ATCC 700971 / NCTC 13129 / Biotype gravis</strain>
    </source>
</reference>
<gene>
    <name evidence="1" type="primary">tsf</name>
    <name type="ordered locus">DIP1507</name>
</gene>
<keyword id="KW-0963">Cytoplasm</keyword>
<keyword id="KW-0251">Elongation factor</keyword>
<keyword id="KW-0648">Protein biosynthesis</keyword>
<keyword id="KW-1185">Reference proteome</keyword>
<comment type="function">
    <text evidence="1">Associates with the EF-Tu.GDP complex and induces the exchange of GDP to GTP. It remains bound to the aminoacyl-tRNA.EF-Tu.GTP complex up to the GTP hydrolysis stage on the ribosome.</text>
</comment>
<comment type="subcellular location">
    <subcellularLocation>
        <location evidence="1">Cytoplasm</location>
    </subcellularLocation>
</comment>
<comment type="similarity">
    <text evidence="1">Belongs to the EF-Ts family.</text>
</comment>
<name>EFTS_CORDI</name>
<organism>
    <name type="scientific">Corynebacterium diphtheriae (strain ATCC 700971 / NCTC 13129 / Biotype gravis)</name>
    <dbReference type="NCBI Taxonomy" id="257309"/>
    <lineage>
        <taxon>Bacteria</taxon>
        <taxon>Bacillati</taxon>
        <taxon>Actinomycetota</taxon>
        <taxon>Actinomycetes</taxon>
        <taxon>Mycobacteriales</taxon>
        <taxon>Corynebacteriaceae</taxon>
        <taxon>Corynebacterium</taxon>
    </lineage>
</organism>
<evidence type="ECO:0000255" key="1">
    <source>
        <dbReference type="HAMAP-Rule" id="MF_00050"/>
    </source>
</evidence>